<keyword id="KW-0106">Calcium</keyword>
<keyword id="KW-0903">Direct protein sequencing</keyword>
<keyword id="KW-1015">Disulfide bond</keyword>
<keyword id="KW-1206">Fibrinogenolytic toxin</keyword>
<keyword id="KW-1199">Hemostasis impairing toxin</keyword>
<keyword id="KW-0378">Hydrolase</keyword>
<keyword id="KW-0479">Metal-binding</keyword>
<keyword id="KW-0482">Metalloprotease</keyword>
<keyword id="KW-0645">Protease</keyword>
<keyword id="KW-0964">Secreted</keyword>
<keyword id="KW-0800">Toxin</keyword>
<keyword id="KW-0862">Zinc</keyword>
<feature type="chain" id="PRO_0000401060" description="Snake venom metalloproteinase HF-1">
    <location>
        <begin position="1"/>
        <end position="238"/>
    </location>
</feature>
<feature type="domain" description="Peptidase M12B" evidence="2">
    <location>
        <begin position="17"/>
        <end position="221"/>
    </location>
</feature>
<feature type="active site" evidence="1 2 3">
    <location>
        <position position="159"/>
    </location>
</feature>
<feature type="binding site" evidence="1">
    <location>
        <position position="106"/>
    </location>
    <ligand>
        <name>Ca(2+)</name>
        <dbReference type="ChEBI" id="CHEBI:29108"/>
    </ligand>
</feature>
<feature type="binding site" evidence="1">
    <location>
        <position position="158"/>
    </location>
    <ligand>
        <name>Zn(2+)</name>
        <dbReference type="ChEBI" id="CHEBI:29105"/>
        <note>catalytic</note>
    </ligand>
</feature>
<feature type="binding site" evidence="1">
    <location>
        <position position="162"/>
    </location>
    <ligand>
        <name>Zn(2+)</name>
        <dbReference type="ChEBI" id="CHEBI:29105"/>
        <note>catalytic</note>
    </ligand>
</feature>
<feature type="binding site" evidence="1">
    <location>
        <position position="168"/>
    </location>
    <ligand>
        <name>Zn(2+)</name>
        <dbReference type="ChEBI" id="CHEBI:29105"/>
        <note>catalytic</note>
    </ligand>
</feature>
<feature type="binding site" evidence="1">
    <location>
        <position position="216"/>
    </location>
    <ligand>
        <name>Ca(2+)</name>
        <dbReference type="ChEBI" id="CHEBI:29108"/>
    </ligand>
</feature>
<feature type="binding site" evidence="1">
    <location>
        <position position="219"/>
    </location>
    <ligand>
        <name>Ca(2+)</name>
        <dbReference type="ChEBI" id="CHEBI:29108"/>
    </ligand>
</feature>
<feature type="disulfide bond" evidence="1 2">
    <location>
        <begin position="130"/>
        <end position="216"/>
    </location>
</feature>
<feature type="disulfide bond" evidence="1 2">
    <location>
        <begin position="174"/>
        <end position="181"/>
    </location>
</feature>
<reference evidence="6" key="1">
    <citation type="journal article" date="2010" name="Protein J.">
        <title>Purification and characterization of a new weak hemorrhagic metalloproteinase BmHF-1 from Bothrops marajoensis snake venom.</title>
        <authorList>
            <person name="Torres-Huaco F.D."/>
            <person name="Ponce-Soto L.A."/>
            <person name="Martins-de-Souza D."/>
            <person name="Marangoni S."/>
        </authorList>
    </citation>
    <scope>PROTEIN SEQUENCE</scope>
    <scope>FUNCTION</scope>
    <scope>ACTIVITY REGULATION</scope>
    <scope>BIOPHYSICOCHEMICAL PROPERTIES</scope>
    <scope>SUBUNIT</scope>
    <scope>SUBCELLULAR LOCATION</scope>
    <scope>TISSUE SPECIFICITY</scope>
    <scope>MASS SPECTROMETRY</scope>
    <source>
        <tissue evidence="4">Venom</tissue>
    </source>
</reference>
<name>VM1H1_BOTMA</name>
<accession>P86802</accession>
<proteinExistence type="evidence at protein level"/>
<protein>
    <recommendedName>
        <fullName>Snake venom metalloproteinase HF-1</fullName>
        <shortName evidence="5">BmHF-1</shortName>
        <shortName>SVMP</shortName>
        <ecNumber>3.4.24.-</ecNumber>
    </recommendedName>
</protein>
<organism>
    <name type="scientific">Bothrops marajoensis</name>
    <name type="common">Marajo lancehead</name>
    <dbReference type="NCBI Taxonomy" id="157554"/>
    <lineage>
        <taxon>Eukaryota</taxon>
        <taxon>Metazoa</taxon>
        <taxon>Chordata</taxon>
        <taxon>Craniata</taxon>
        <taxon>Vertebrata</taxon>
        <taxon>Euteleostomi</taxon>
        <taxon>Lepidosauria</taxon>
        <taxon>Squamata</taxon>
        <taxon>Bifurcata</taxon>
        <taxon>Unidentata</taxon>
        <taxon>Episquamata</taxon>
        <taxon>Toxicofera</taxon>
        <taxon>Serpentes</taxon>
        <taxon>Colubroidea</taxon>
        <taxon>Viperidae</taxon>
        <taxon>Crotalinae</taxon>
        <taxon>Bothrops</taxon>
    </lineage>
</organism>
<sequence>PCWKGWSEDEQNLWPQRYIQLVVVADHGMFMKYNGDLAAIRKRVHELVNNINGFYRSLNIDVSLTDLEIWSDQDFITVVQSSSAKNTLNSFGEWREADLLRRKSHDHAQLLTAIDLDDDTVGLAYTSSMCNPRKSVAWGQDHSEEPINLLDVGVTMAHELGHNLGMNHDEEKKCHCGASLCIMSPSITEGPSLEFSDDSMGYYQSFLVVVNYNPQCILNKPEDQYYYILSPKHRIYSW</sequence>
<dbReference type="EC" id="3.4.24.-"/>
<dbReference type="SMR" id="P86802"/>
<dbReference type="GO" id="GO:0005576">
    <property type="term" value="C:extracellular region"/>
    <property type="evidence" value="ECO:0000314"/>
    <property type="project" value="UniProtKB"/>
</dbReference>
<dbReference type="GO" id="GO:0005886">
    <property type="term" value="C:plasma membrane"/>
    <property type="evidence" value="ECO:0007669"/>
    <property type="project" value="TreeGrafter"/>
</dbReference>
<dbReference type="GO" id="GO:0004175">
    <property type="term" value="F:endopeptidase activity"/>
    <property type="evidence" value="ECO:0000314"/>
    <property type="project" value="UniProtKB"/>
</dbReference>
<dbReference type="GO" id="GO:0046872">
    <property type="term" value="F:metal ion binding"/>
    <property type="evidence" value="ECO:0007669"/>
    <property type="project" value="UniProtKB-KW"/>
</dbReference>
<dbReference type="GO" id="GO:0004222">
    <property type="term" value="F:metalloendopeptidase activity"/>
    <property type="evidence" value="ECO:0007669"/>
    <property type="project" value="InterPro"/>
</dbReference>
<dbReference type="GO" id="GO:0090729">
    <property type="term" value="F:toxin activity"/>
    <property type="evidence" value="ECO:0007669"/>
    <property type="project" value="UniProtKB-KW"/>
</dbReference>
<dbReference type="GO" id="GO:0006508">
    <property type="term" value="P:proteolysis"/>
    <property type="evidence" value="ECO:0007669"/>
    <property type="project" value="UniProtKB-KW"/>
</dbReference>
<dbReference type="CDD" id="cd04269">
    <property type="entry name" value="ZnMc_adamalysin_II_like"/>
    <property type="match status" value="1"/>
</dbReference>
<dbReference type="FunFam" id="3.40.390.10:FF:000002">
    <property type="entry name" value="Disintegrin and metalloproteinase domain-containing protein 22"/>
    <property type="match status" value="1"/>
</dbReference>
<dbReference type="Gene3D" id="3.40.390.10">
    <property type="entry name" value="Collagenase (Catalytic Domain)"/>
    <property type="match status" value="1"/>
</dbReference>
<dbReference type="InterPro" id="IPR024079">
    <property type="entry name" value="MetalloPept_cat_dom_sf"/>
</dbReference>
<dbReference type="InterPro" id="IPR001590">
    <property type="entry name" value="Peptidase_M12B"/>
</dbReference>
<dbReference type="InterPro" id="IPR034027">
    <property type="entry name" value="Reprolysin_adamalysin"/>
</dbReference>
<dbReference type="PANTHER" id="PTHR11905">
    <property type="entry name" value="ADAM A DISINTEGRIN AND METALLOPROTEASE DOMAIN"/>
    <property type="match status" value="1"/>
</dbReference>
<dbReference type="PANTHER" id="PTHR11905:SF32">
    <property type="entry name" value="DISINTEGRIN AND METALLOPROTEINASE DOMAIN-CONTAINING PROTEIN 28"/>
    <property type="match status" value="1"/>
</dbReference>
<dbReference type="Pfam" id="PF01421">
    <property type="entry name" value="Reprolysin"/>
    <property type="match status" value="1"/>
</dbReference>
<dbReference type="SUPFAM" id="SSF55486">
    <property type="entry name" value="Metalloproteases ('zincins'), catalytic domain"/>
    <property type="match status" value="1"/>
</dbReference>
<dbReference type="PROSITE" id="PS50215">
    <property type="entry name" value="ADAM_MEPRO"/>
    <property type="match status" value="1"/>
</dbReference>
<dbReference type="PROSITE" id="PS00142">
    <property type="entry name" value="ZINC_PROTEASE"/>
    <property type="match status" value="1"/>
</dbReference>
<evidence type="ECO:0000250" key="1">
    <source>
        <dbReference type="UniProtKB" id="P15167"/>
    </source>
</evidence>
<evidence type="ECO:0000255" key="2">
    <source>
        <dbReference type="PROSITE-ProRule" id="PRU00276"/>
    </source>
</evidence>
<evidence type="ECO:0000255" key="3">
    <source>
        <dbReference type="PROSITE-ProRule" id="PRU10095"/>
    </source>
</evidence>
<evidence type="ECO:0000269" key="4">
    <source>
    </source>
</evidence>
<evidence type="ECO:0000303" key="5">
    <source>
    </source>
</evidence>
<evidence type="ECO:0000305" key="6"/>
<comment type="function">
    <text evidence="4">Snake venom zinc metalloprotease that is weakly hemorrhagic and has Aalpha, Bbeta fibrinogenolytic activities. Cleaves the Aalpha chain of fibrinogen first, followed by the Bbeta chain and shows no effect on the gamma chain. Has caseinolytic activity. Induces dose-dependent edema.</text>
</comment>
<comment type="cofactor">
    <cofactor evidence="1">
        <name>Zn(2+)</name>
        <dbReference type="ChEBI" id="CHEBI:29105"/>
    </cofactor>
    <text evidence="1">Binds 1 zinc ion per subunit.</text>
</comment>
<comment type="activity regulation">
    <text evidence="4">Inhibited by EDTA and EGTA. Inhibited by serum and antihemorrhagic factors Da2-I and Da2-II from D.albiventris. Not inhibited by PMSF or SBT-I.</text>
</comment>
<comment type="biophysicochemical properties">
    <kinetics>
        <Vmax evidence="4">7.51 umol/min/mg enzyme with casein as substrate</Vmax>
    </kinetics>
    <phDependence>
        <text evidence="4">Optimum pH is 8. Activity decreases rapidly at higher or lower pH.</text>
    </phDependence>
    <temperatureDependence>
        <text evidence="4">Optimum temperature for caseinolytic activity is 40 degrees Celsius. Activity decreases rapidly at higher or lower temperatures. No activity below 10 degrees Celsius or above 70 degrees Celsius.</text>
    </temperatureDependence>
</comment>
<comment type="subunit">
    <text evidence="4">Monomer.</text>
</comment>
<comment type="subcellular location">
    <subcellularLocation>
        <location evidence="4">Secreted</location>
    </subcellularLocation>
</comment>
<comment type="tissue specificity">
    <text evidence="4">Expressed by the venom gland.</text>
</comment>
<comment type="mass spectrometry"/>
<comment type="similarity">
    <text evidence="6">Belongs to the venom metalloproteinase (M12B) family. P-I subfamily.</text>
</comment>